<evidence type="ECO:0000255" key="1">
    <source>
        <dbReference type="HAMAP-Rule" id="MF_01558"/>
    </source>
</evidence>
<evidence type="ECO:0000255" key="2">
    <source>
        <dbReference type="PROSITE-ProRule" id="PRU01083"/>
    </source>
</evidence>
<sequence length="294" mass="31561">MHPRFQTAFAQLADNLQSALAPILAGHHFPAMLTAEQVSTLKNTAGLDEDALAFALLPLAAACARTDLSHFNVGAIARGVSGNWYFGANMEFLGATMQQTVHAEQSAISHAWLRGEKGLAAVTVNYTPCGHCRQFMNELNSGLDLRIHLPGRAPHTLRDYLPDAFGPKDLEIKTLLMDEQDHGFTLTGDTLTQAAITAANKSHMPYSHSPSGVALECKDGRIFTGSYAENAAFNPTLPPLQGALNLLSLNGYDYADIQRAILAEKGDAALIQWDATAATLKALGCHNIDRVLLG</sequence>
<name>CDD_SALCH</name>
<keyword id="KW-0378">Hydrolase</keyword>
<keyword id="KW-0479">Metal-binding</keyword>
<keyword id="KW-0862">Zinc</keyword>
<feature type="chain" id="PRO_0000171660" description="Cytidine deaminase">
    <location>
        <begin position="1"/>
        <end position="294"/>
    </location>
</feature>
<feature type="domain" description="CMP/dCMP-type deaminase 1" evidence="2">
    <location>
        <begin position="48"/>
        <end position="168"/>
    </location>
</feature>
<feature type="domain" description="CMP/dCMP-type deaminase 2" evidence="2">
    <location>
        <begin position="186"/>
        <end position="294"/>
    </location>
</feature>
<feature type="active site" description="Proton donor" evidence="1">
    <location>
        <position position="104"/>
    </location>
</feature>
<feature type="binding site" evidence="1">
    <location>
        <begin position="89"/>
        <end position="91"/>
    </location>
    <ligand>
        <name>substrate</name>
    </ligand>
</feature>
<feature type="binding site" evidence="1">
    <location>
        <position position="102"/>
    </location>
    <ligand>
        <name>Zn(2+)</name>
        <dbReference type="ChEBI" id="CHEBI:29105"/>
        <note>catalytic</note>
    </ligand>
</feature>
<feature type="binding site" evidence="1">
    <location>
        <position position="129"/>
    </location>
    <ligand>
        <name>Zn(2+)</name>
        <dbReference type="ChEBI" id="CHEBI:29105"/>
        <note>catalytic</note>
    </ligand>
</feature>
<feature type="binding site" evidence="1">
    <location>
        <position position="132"/>
    </location>
    <ligand>
        <name>Zn(2+)</name>
        <dbReference type="ChEBI" id="CHEBI:29105"/>
        <note>catalytic</note>
    </ligand>
</feature>
<reference key="1">
    <citation type="journal article" date="2005" name="Nucleic Acids Res.">
        <title>The genome sequence of Salmonella enterica serovar Choleraesuis, a highly invasive and resistant zoonotic pathogen.</title>
        <authorList>
            <person name="Chiu C.-H."/>
            <person name="Tang P."/>
            <person name="Chu C."/>
            <person name="Hu S."/>
            <person name="Bao Q."/>
            <person name="Yu J."/>
            <person name="Chou Y.-Y."/>
            <person name="Wang H.-S."/>
            <person name="Lee Y.-S."/>
        </authorList>
    </citation>
    <scope>NUCLEOTIDE SEQUENCE [LARGE SCALE GENOMIC DNA]</scope>
    <source>
        <strain>SC-B67</strain>
    </source>
</reference>
<organism>
    <name type="scientific">Salmonella choleraesuis (strain SC-B67)</name>
    <dbReference type="NCBI Taxonomy" id="321314"/>
    <lineage>
        <taxon>Bacteria</taxon>
        <taxon>Pseudomonadati</taxon>
        <taxon>Pseudomonadota</taxon>
        <taxon>Gammaproteobacteria</taxon>
        <taxon>Enterobacterales</taxon>
        <taxon>Enterobacteriaceae</taxon>
        <taxon>Salmonella</taxon>
    </lineage>
</organism>
<protein>
    <recommendedName>
        <fullName evidence="1">Cytidine deaminase</fullName>
        <ecNumber evidence="1">3.5.4.5</ecNumber>
    </recommendedName>
    <alternativeName>
        <fullName evidence="1">Cytidine aminohydrolase</fullName>
        <shortName evidence="1">CDA</shortName>
    </alternativeName>
</protein>
<gene>
    <name evidence="1" type="primary">cdd</name>
    <name type="ordered locus">SCH_2200</name>
</gene>
<accession>Q57MF5</accession>
<dbReference type="EC" id="3.5.4.5" evidence="1"/>
<dbReference type="EMBL" id="AE017220">
    <property type="protein sequence ID" value="AAX66106.1"/>
    <property type="molecule type" value="Genomic_DNA"/>
</dbReference>
<dbReference type="RefSeq" id="WP_001540437.1">
    <property type="nucleotide sequence ID" value="NC_006905.1"/>
</dbReference>
<dbReference type="SMR" id="Q57MF5"/>
<dbReference type="KEGG" id="sec:SCH_2200"/>
<dbReference type="HOGENOM" id="CLU_052424_0_0_6"/>
<dbReference type="Proteomes" id="UP000000538">
    <property type="component" value="Chromosome"/>
</dbReference>
<dbReference type="GO" id="GO:0005829">
    <property type="term" value="C:cytosol"/>
    <property type="evidence" value="ECO:0007669"/>
    <property type="project" value="TreeGrafter"/>
</dbReference>
<dbReference type="GO" id="GO:0004126">
    <property type="term" value="F:cytidine deaminase activity"/>
    <property type="evidence" value="ECO:0007669"/>
    <property type="project" value="UniProtKB-UniRule"/>
</dbReference>
<dbReference type="GO" id="GO:0042802">
    <property type="term" value="F:identical protein binding"/>
    <property type="evidence" value="ECO:0007669"/>
    <property type="project" value="UniProtKB-ARBA"/>
</dbReference>
<dbReference type="GO" id="GO:0008270">
    <property type="term" value="F:zinc ion binding"/>
    <property type="evidence" value="ECO:0007669"/>
    <property type="project" value="UniProtKB-UniRule"/>
</dbReference>
<dbReference type="GO" id="GO:0009972">
    <property type="term" value="P:cytidine deamination"/>
    <property type="evidence" value="ECO:0007669"/>
    <property type="project" value="InterPro"/>
</dbReference>
<dbReference type="CDD" id="cd01283">
    <property type="entry name" value="cytidine_deaminase"/>
    <property type="match status" value="2"/>
</dbReference>
<dbReference type="FunFam" id="3.40.140.10:FF:000006">
    <property type="entry name" value="Cytidine deaminase"/>
    <property type="match status" value="1"/>
</dbReference>
<dbReference type="FunFam" id="3.40.140.10:FF:000007">
    <property type="entry name" value="Cytidine deaminase"/>
    <property type="match status" value="1"/>
</dbReference>
<dbReference type="Gene3D" id="3.40.140.10">
    <property type="entry name" value="Cytidine Deaminase, domain 2"/>
    <property type="match status" value="2"/>
</dbReference>
<dbReference type="HAMAP" id="MF_01558">
    <property type="entry name" value="Cyt_deam"/>
    <property type="match status" value="1"/>
</dbReference>
<dbReference type="InterPro" id="IPR016192">
    <property type="entry name" value="APOBEC/CMP_deaminase_Zn-bd"/>
</dbReference>
<dbReference type="InterPro" id="IPR002125">
    <property type="entry name" value="CMP_dCMP_dom"/>
</dbReference>
<dbReference type="InterPro" id="IPR013171">
    <property type="entry name" value="Cyd/dCyd_deaminase_Zn-bd"/>
</dbReference>
<dbReference type="InterPro" id="IPR050202">
    <property type="entry name" value="Cyt/Deoxycyt_deaminase"/>
</dbReference>
<dbReference type="InterPro" id="IPR006263">
    <property type="entry name" value="Cyt_deam_dimer"/>
</dbReference>
<dbReference type="InterPro" id="IPR016193">
    <property type="entry name" value="Cytidine_deaminase-like"/>
</dbReference>
<dbReference type="InterPro" id="IPR020797">
    <property type="entry name" value="Cytidine_deaminase_bacteria"/>
</dbReference>
<dbReference type="NCBIfam" id="TIGR01355">
    <property type="entry name" value="cyt_deam_dimer"/>
    <property type="match status" value="1"/>
</dbReference>
<dbReference type="NCBIfam" id="NF006537">
    <property type="entry name" value="PRK09027.1"/>
    <property type="match status" value="1"/>
</dbReference>
<dbReference type="PANTHER" id="PTHR11644">
    <property type="entry name" value="CYTIDINE DEAMINASE"/>
    <property type="match status" value="1"/>
</dbReference>
<dbReference type="PANTHER" id="PTHR11644:SF2">
    <property type="entry name" value="CYTIDINE DEAMINASE"/>
    <property type="match status" value="1"/>
</dbReference>
<dbReference type="Pfam" id="PF00383">
    <property type="entry name" value="dCMP_cyt_deam_1"/>
    <property type="match status" value="1"/>
</dbReference>
<dbReference type="Pfam" id="PF08211">
    <property type="entry name" value="dCMP_cyt_deam_2"/>
    <property type="match status" value="1"/>
</dbReference>
<dbReference type="PIRSF" id="PIRSF006334">
    <property type="entry name" value="Cdd_plus_pseudo"/>
    <property type="match status" value="1"/>
</dbReference>
<dbReference type="SUPFAM" id="SSF53927">
    <property type="entry name" value="Cytidine deaminase-like"/>
    <property type="match status" value="2"/>
</dbReference>
<dbReference type="PROSITE" id="PS00903">
    <property type="entry name" value="CYT_DCMP_DEAMINASES_1"/>
    <property type="match status" value="1"/>
</dbReference>
<dbReference type="PROSITE" id="PS51747">
    <property type="entry name" value="CYT_DCMP_DEAMINASES_2"/>
    <property type="match status" value="2"/>
</dbReference>
<proteinExistence type="inferred from homology"/>
<comment type="function">
    <text evidence="1">This enzyme scavenges exogenous and endogenous cytidine and 2'-deoxycytidine for UMP synthesis.</text>
</comment>
<comment type="catalytic activity">
    <reaction evidence="1">
        <text>cytidine + H2O + H(+) = uridine + NH4(+)</text>
        <dbReference type="Rhea" id="RHEA:16069"/>
        <dbReference type="ChEBI" id="CHEBI:15377"/>
        <dbReference type="ChEBI" id="CHEBI:15378"/>
        <dbReference type="ChEBI" id="CHEBI:16704"/>
        <dbReference type="ChEBI" id="CHEBI:17562"/>
        <dbReference type="ChEBI" id="CHEBI:28938"/>
        <dbReference type="EC" id="3.5.4.5"/>
    </reaction>
</comment>
<comment type="catalytic activity">
    <reaction evidence="1">
        <text>2'-deoxycytidine + H2O + H(+) = 2'-deoxyuridine + NH4(+)</text>
        <dbReference type="Rhea" id="RHEA:13433"/>
        <dbReference type="ChEBI" id="CHEBI:15377"/>
        <dbReference type="ChEBI" id="CHEBI:15378"/>
        <dbReference type="ChEBI" id="CHEBI:15698"/>
        <dbReference type="ChEBI" id="CHEBI:16450"/>
        <dbReference type="ChEBI" id="CHEBI:28938"/>
        <dbReference type="EC" id="3.5.4.5"/>
    </reaction>
</comment>
<comment type="cofactor">
    <cofactor evidence="1">
        <name>Zn(2+)</name>
        <dbReference type="ChEBI" id="CHEBI:29105"/>
    </cofactor>
    <text evidence="1">Binds 1 zinc ion.</text>
</comment>
<comment type="subunit">
    <text evidence="1">Homodimer.</text>
</comment>
<comment type="similarity">
    <text evidence="1">Belongs to the cytidine and deoxycytidylate deaminase family.</text>
</comment>